<comment type="function">
    <text evidence="1">Glycoprotein that probably modulates membrane fusion events during secondary envelopment of cytoplasmic capsids that bud into specific trans-Golgi network (TGN)-derived membranes. Also plays a role, together with gB, in virus-induced cell-to-cell fusion (syncytia formation). Seems to block fusion of virions with infected-cell membranes (By similarity).</text>
</comment>
<comment type="subunit">
    <text evidence="1">Interacts (via UL20 interaction region) with protein UL20 (via N-terminus); this interaction probably plays a role in the coordinate transport of protein UL20 and gK to the trans-Golgi network (TGN), and is required for the cell surface expression of gK.</text>
</comment>
<comment type="subcellular location">
    <subcellularLocation>
        <location evidence="1">Host cell membrane</location>
        <topology evidence="1">Multi-pass membrane protein</topology>
    </subcellularLocation>
    <subcellularLocation>
        <location evidence="1">Host endosome membrane</location>
        <topology evidence="1">Multi-pass membrane protein</topology>
    </subcellularLocation>
    <subcellularLocation>
        <location evidence="1">Host Golgi apparatus membrane</location>
        <topology evidence="1">Multi-pass membrane protein</topology>
    </subcellularLocation>
    <text evidence="1">During virion morphogenesis, this protein probably accumulates in the endosomes and trans-Golgi where secondary envelopment occurs. It is probably transported with UL20 to the cell surface from where it is endocytosed and directed to the trans-Golgi network (TGN). Cell surface expression of gK is required for virus-induced cell-to-cell fusion. Likely not present in extracellular virions (By similarity).</text>
</comment>
<comment type="PTM">
    <text evidence="1">N-glycosylated.</text>
</comment>
<comment type="similarity">
    <text evidence="3">Belongs to the alphaherpesvirinae glycoprotein K family.</text>
</comment>
<reference key="1">
    <citation type="journal article" date="1990" name="Gene">
        <title>Nucleotide sequence of the herpes simplex virus type-2 syn gene that causes cell fusion.</title>
        <authorList>
            <person name="Debroy C."/>
        </authorList>
    </citation>
    <scope>NUCLEOTIDE SEQUENCE [GENOMIC DNA]</scope>
</reference>
<reference key="2">
    <citation type="journal article" date="1998" name="J. Virol.">
        <title>The genome sequence of herpes simplex virus type 2.</title>
        <authorList>
            <person name="Dolan A."/>
            <person name="Jamieson F.E."/>
            <person name="Cunningham C."/>
            <person name="Barnett B.C."/>
            <person name="McGeoch D.J."/>
        </authorList>
    </citation>
    <scope>NUCLEOTIDE SEQUENCE [LARGE SCALE GENOMIC DNA]</scope>
</reference>
<reference key="3">
    <citation type="journal article" date="1991" name="J. Gen. Virol.">
        <title>Comparative sequence analysis of the long repeat regions and adjoining parts of the long unique regions in the genomes of herpes simplex viruses types 1 and 2.</title>
        <authorList>
            <person name="McGeoch D.J."/>
            <person name="Cunningham C."/>
            <person name="McIntyre G."/>
            <person name="Dolan A."/>
        </authorList>
    </citation>
    <scope>NUCLEOTIDE SEQUENCE [GENOMIC DNA] OF 203-338</scope>
</reference>
<organism>
    <name type="scientific">Human herpesvirus 2 (strain HG52)</name>
    <name type="common">HHV-2</name>
    <name type="synonym">Human herpes simplex virus 2</name>
    <dbReference type="NCBI Taxonomy" id="10315"/>
    <lineage>
        <taxon>Viruses</taxon>
        <taxon>Duplodnaviria</taxon>
        <taxon>Heunggongvirae</taxon>
        <taxon>Peploviricota</taxon>
        <taxon>Herviviricetes</taxon>
        <taxon>Herpesvirales</taxon>
        <taxon>Orthoherpesviridae</taxon>
        <taxon>Alphaherpesvirinae</taxon>
        <taxon>Simplexvirus</taxon>
        <taxon>Simplexvirus humanalpha2</taxon>
        <taxon>Human herpesvirus 2</taxon>
    </lineage>
</organism>
<gene>
    <name type="primary">gK</name>
    <name type="ORF">UL53</name>
</gene>
<accession>P22485</accession>
<accession>P89472</accession>
<protein>
    <recommendedName>
        <fullName>Envelope glycoprotein K</fullName>
    </recommendedName>
    <alternativeName>
        <fullName>Syncytial protein</fullName>
    </alternativeName>
</protein>
<proteinExistence type="inferred from homology"/>
<evidence type="ECO:0000250" key="1"/>
<evidence type="ECO:0000255" key="2"/>
<evidence type="ECO:0000305" key="3"/>
<keyword id="KW-0325">Glycoprotein</keyword>
<keyword id="KW-1032">Host cell membrane</keyword>
<keyword id="KW-1039">Host endosome</keyword>
<keyword id="KW-1040">Host Golgi apparatus</keyword>
<keyword id="KW-1043">Host membrane</keyword>
<keyword id="KW-0472">Membrane</keyword>
<keyword id="KW-1185">Reference proteome</keyword>
<keyword id="KW-0732">Signal</keyword>
<keyword id="KW-1180">Syncytium formation induced by viral infection</keyword>
<keyword id="KW-0812">Transmembrane</keyword>
<keyword id="KW-1133">Transmembrane helix</keyword>
<keyword id="KW-1181">Viral primary envelope fusion with host outer nuclear membrane</keyword>
<keyword id="KW-1188">Viral release from host cell</keyword>
<dbReference type="EMBL" id="X15801">
    <property type="protein sequence ID" value="CAA33800.1"/>
    <property type="molecule type" value="Genomic_DNA"/>
</dbReference>
<dbReference type="EMBL" id="Z86099">
    <property type="protein sequence ID" value="CAB06740.1"/>
    <property type="molecule type" value="Genomic_DNA"/>
</dbReference>
<dbReference type="EMBL" id="D10471">
    <property type="protein sequence ID" value="BAA01268.1"/>
    <property type="molecule type" value="Genomic_DNA"/>
</dbReference>
<dbReference type="PIR" id="JH0143">
    <property type="entry name" value="JH0143"/>
</dbReference>
<dbReference type="PIR" id="PQ0333">
    <property type="entry name" value="MMBEHB"/>
</dbReference>
<dbReference type="SMR" id="P22485"/>
<dbReference type="GlyCosmos" id="P22485">
    <property type="glycosylation" value="2 sites, No reported glycans"/>
</dbReference>
<dbReference type="Proteomes" id="UP000001874">
    <property type="component" value="Segment"/>
</dbReference>
<dbReference type="GO" id="GO:0044175">
    <property type="term" value="C:host cell endosome membrane"/>
    <property type="evidence" value="ECO:0007669"/>
    <property type="project" value="UniProtKB-SubCell"/>
</dbReference>
<dbReference type="GO" id="GO:0044178">
    <property type="term" value="C:host cell Golgi membrane"/>
    <property type="evidence" value="ECO:0007669"/>
    <property type="project" value="UniProtKB-SubCell"/>
</dbReference>
<dbReference type="GO" id="GO:0020002">
    <property type="term" value="C:host cell plasma membrane"/>
    <property type="evidence" value="ECO:0007669"/>
    <property type="project" value="UniProtKB-SubCell"/>
</dbReference>
<dbReference type="GO" id="GO:0016020">
    <property type="term" value="C:membrane"/>
    <property type="evidence" value="ECO:0007669"/>
    <property type="project" value="UniProtKB-KW"/>
</dbReference>
<dbReference type="GO" id="GO:0039700">
    <property type="term" value="P:fusion of viral membrane with host outer nuclear membrane"/>
    <property type="evidence" value="ECO:0007669"/>
    <property type="project" value="UniProtKB-KW"/>
</dbReference>
<dbReference type="GO" id="GO:0060141">
    <property type="term" value="P:symbiont-mediated induction of syncytium formation"/>
    <property type="evidence" value="ECO:0007669"/>
    <property type="project" value="UniProtKB-KW"/>
</dbReference>
<dbReference type="InterPro" id="IPR002567">
    <property type="entry name" value="GK"/>
</dbReference>
<dbReference type="Pfam" id="PF01621">
    <property type="entry name" value="Fusion_gly_K"/>
    <property type="match status" value="1"/>
</dbReference>
<sequence>MLAVRSLQHLTTVIFITAYGLVLAWYIVFGASPLHRCIYAVRPAGAHNDTALVWMKINQTLLFLGPPTAPPGGAWTPHARVCYANIIEGRAVSLPAIPGAMSRRVMNVHEAVNCLEALWDTQMRLVVVGWFLYLAFVALHQRRCMFGVVSPAHSMVAPATYLLNYAGRIVSSVFLQYPYTKITRLLCELSVQRQTLVQLFEADPVTFLYHRPAIGVIVGCELLLRFVALGLIVGTALISRGACAITHPLFLTITTWCFVSIIALTELYFILRRGSAPKNAEPAAPRGRSKGWSGVCGRCCSIILSGIAVRLCYIAVVAGVVLVALRYEQEIQRRLFDL</sequence>
<name>GK_HHV2H</name>
<organismHost>
    <name type="scientific">Homo sapiens</name>
    <name type="common">Human</name>
    <dbReference type="NCBI Taxonomy" id="9606"/>
</organismHost>
<feature type="signal peptide" evidence="1">
    <location>
        <begin position="1"/>
        <end position="30"/>
    </location>
</feature>
<feature type="chain" id="PRO_0000038303" description="Envelope glycoprotein K">
    <location>
        <begin position="31"/>
        <end position="338"/>
    </location>
</feature>
<feature type="topological domain" description="Extracellular" evidence="2">
    <location>
        <begin position="31"/>
        <end position="121"/>
    </location>
</feature>
<feature type="transmembrane region" description="Helical" evidence="2">
    <location>
        <begin position="122"/>
        <end position="140"/>
    </location>
</feature>
<feature type="topological domain" description="Cytoplasmic" evidence="2">
    <location>
        <begin position="141"/>
        <end position="212"/>
    </location>
</feature>
<feature type="transmembrane region" description="Helical" evidence="2">
    <location>
        <begin position="213"/>
        <end position="233"/>
    </location>
</feature>
<feature type="topological domain" description="Extracellular" evidence="2">
    <location>
        <begin position="234"/>
        <end position="243"/>
    </location>
</feature>
<feature type="transmembrane region" description="Helical" evidence="2">
    <location>
        <begin position="244"/>
        <end position="264"/>
    </location>
</feature>
<feature type="topological domain" description="Cytoplasmic" evidence="2">
    <location>
        <begin position="265"/>
        <end position="301"/>
    </location>
</feature>
<feature type="transmembrane region" description="Helical" evidence="2">
    <location>
        <begin position="302"/>
        <end position="322"/>
    </location>
</feature>
<feature type="topological domain" description="Extracellular" evidence="2">
    <location>
        <begin position="323"/>
        <end position="338"/>
    </location>
</feature>
<feature type="region of interest" description="Involved in fusion" evidence="2">
    <location>
        <begin position="31"/>
        <end position="121"/>
    </location>
</feature>
<feature type="region of interest" description="Interaction with UL20" evidence="2">
    <location>
        <begin position="265"/>
        <end position="301"/>
    </location>
</feature>
<feature type="glycosylation site" description="N-linked (GlcNAc...) asparagine; by host" evidence="2">
    <location>
        <position position="48"/>
    </location>
</feature>
<feature type="glycosylation site" description="N-linked (GlcNAc...) asparagine; by host" evidence="2">
    <location>
        <position position="58"/>
    </location>
</feature>
<feature type="sequence conflict" description="In Ref. 1; CAA33800." evidence="3" ref="1">
    <original>CY</original>
    <variation>SD</variation>
    <location>
        <begin position="82"/>
        <end position="83"/>
    </location>
</feature>
<feature type="sequence conflict" description="In Ref. 1; CAA33800." evidence="3" ref="1">
    <original>IPG</original>
    <variation>HPA</variation>
    <location>
        <begin position="97"/>
        <end position="99"/>
    </location>
</feature>
<feature type="sequence conflict" description="In Ref. 1; CAA33800." evidence="3" ref="1">
    <original>A</original>
    <variation>T</variation>
    <location>
        <position position="202"/>
    </location>
</feature>
<feature type="sequence conflict" description="In Ref. 1; CAA33800." evidence="3" ref="1">
    <original>IG</original>
    <variation>VR</variation>
    <location>
        <begin position="214"/>
        <end position="215"/>
    </location>
</feature>
<feature type="sequence conflict" description="In Ref. 1; CAA33800." evidence="3" ref="1">
    <original>LLLR</original>
    <variation>AAAP</variation>
    <location>
        <begin position="222"/>
        <end position="225"/>
    </location>
</feature>
<feature type="sequence conflict" description="In Ref. 1; CAA33800." evidence="3" ref="1">
    <original>LIS</original>
    <variation>VIC</variation>
    <location>
        <begin position="237"/>
        <end position="239"/>
    </location>
</feature>